<evidence type="ECO:0000255" key="1">
    <source>
        <dbReference type="HAMAP-Rule" id="MF_00739"/>
    </source>
</evidence>
<name>URE3_CORU7</name>
<comment type="catalytic activity">
    <reaction evidence="1">
        <text>urea + 2 H2O + H(+) = hydrogencarbonate + 2 NH4(+)</text>
        <dbReference type="Rhea" id="RHEA:20557"/>
        <dbReference type="ChEBI" id="CHEBI:15377"/>
        <dbReference type="ChEBI" id="CHEBI:15378"/>
        <dbReference type="ChEBI" id="CHEBI:16199"/>
        <dbReference type="ChEBI" id="CHEBI:17544"/>
        <dbReference type="ChEBI" id="CHEBI:28938"/>
        <dbReference type="EC" id="3.5.1.5"/>
    </reaction>
</comment>
<comment type="pathway">
    <text evidence="1">Nitrogen metabolism; urea degradation; CO(2) and NH(3) from urea (urease route): step 1/1.</text>
</comment>
<comment type="subunit">
    <text evidence="1">Heterotrimer of UreA (gamma), UreB (beta) and UreC (alpha) subunits. Three heterotrimers associate to form the active enzyme.</text>
</comment>
<comment type="subcellular location">
    <subcellularLocation>
        <location evidence="1">Cytoplasm</location>
    </subcellularLocation>
</comment>
<comment type="similarity">
    <text evidence="1">Belongs to the urease gamma subunit family.</text>
</comment>
<proteinExistence type="inferred from homology"/>
<sequence length="100" mass="11172">MHLTAREQEKLLIVVAADVARRRKERGVKLNHPEAVAYITAELMEGARDGKTVAELMSEGQQYLTRDDVMEGVPEMISDVQVEATFPDGTKLVTVHNPIR</sequence>
<protein>
    <recommendedName>
        <fullName evidence="1">Urease subunit gamma</fullName>
        <ecNumber evidence="1">3.5.1.5</ecNumber>
    </recommendedName>
    <alternativeName>
        <fullName evidence="1">Urea amidohydrolase subunit gamma</fullName>
    </alternativeName>
</protein>
<gene>
    <name evidence="1" type="primary">ureA</name>
    <name type="ordered locus">cu1771</name>
</gene>
<feature type="chain" id="PRO_1000199858" description="Urease subunit gamma">
    <location>
        <begin position="1"/>
        <end position="100"/>
    </location>
</feature>
<dbReference type="EC" id="3.5.1.5" evidence="1"/>
<dbReference type="EMBL" id="AM942444">
    <property type="protein sequence ID" value="CAQ05730.1"/>
    <property type="molecule type" value="Genomic_DNA"/>
</dbReference>
<dbReference type="RefSeq" id="WP_012361006.1">
    <property type="nucleotide sequence ID" value="NC_010545.1"/>
</dbReference>
<dbReference type="SMR" id="B1VHT0"/>
<dbReference type="STRING" id="504474.cu1771"/>
<dbReference type="GeneID" id="60604554"/>
<dbReference type="KEGG" id="cur:cu1771"/>
<dbReference type="eggNOG" id="COG0831">
    <property type="taxonomic scope" value="Bacteria"/>
</dbReference>
<dbReference type="HOGENOM" id="CLU_145825_1_0_11"/>
<dbReference type="UniPathway" id="UPA00258">
    <property type="reaction ID" value="UER00370"/>
</dbReference>
<dbReference type="Proteomes" id="UP000001727">
    <property type="component" value="Chromosome"/>
</dbReference>
<dbReference type="GO" id="GO:0005737">
    <property type="term" value="C:cytoplasm"/>
    <property type="evidence" value="ECO:0007669"/>
    <property type="project" value="UniProtKB-SubCell"/>
</dbReference>
<dbReference type="GO" id="GO:0016151">
    <property type="term" value="F:nickel cation binding"/>
    <property type="evidence" value="ECO:0007669"/>
    <property type="project" value="InterPro"/>
</dbReference>
<dbReference type="GO" id="GO:0009039">
    <property type="term" value="F:urease activity"/>
    <property type="evidence" value="ECO:0007669"/>
    <property type="project" value="UniProtKB-UniRule"/>
</dbReference>
<dbReference type="GO" id="GO:0043419">
    <property type="term" value="P:urea catabolic process"/>
    <property type="evidence" value="ECO:0007669"/>
    <property type="project" value="UniProtKB-UniRule"/>
</dbReference>
<dbReference type="CDD" id="cd00390">
    <property type="entry name" value="Urease_gamma"/>
    <property type="match status" value="1"/>
</dbReference>
<dbReference type="Gene3D" id="3.30.280.10">
    <property type="entry name" value="Urease, gamma-like subunit"/>
    <property type="match status" value="1"/>
</dbReference>
<dbReference type="HAMAP" id="MF_00739">
    <property type="entry name" value="Urease_gamma"/>
    <property type="match status" value="1"/>
</dbReference>
<dbReference type="InterPro" id="IPR012010">
    <property type="entry name" value="Urease_gamma"/>
</dbReference>
<dbReference type="InterPro" id="IPR002026">
    <property type="entry name" value="Urease_gamma/gamma-beta_su"/>
</dbReference>
<dbReference type="InterPro" id="IPR036463">
    <property type="entry name" value="Urease_gamma_sf"/>
</dbReference>
<dbReference type="InterPro" id="IPR050069">
    <property type="entry name" value="Urease_subunit"/>
</dbReference>
<dbReference type="NCBIfam" id="NF009712">
    <property type="entry name" value="PRK13241.1"/>
    <property type="match status" value="1"/>
</dbReference>
<dbReference type="NCBIfam" id="TIGR00193">
    <property type="entry name" value="urease_gam"/>
    <property type="match status" value="1"/>
</dbReference>
<dbReference type="PANTHER" id="PTHR33569">
    <property type="entry name" value="UREASE"/>
    <property type="match status" value="1"/>
</dbReference>
<dbReference type="PANTHER" id="PTHR33569:SF1">
    <property type="entry name" value="UREASE"/>
    <property type="match status" value="1"/>
</dbReference>
<dbReference type="Pfam" id="PF00547">
    <property type="entry name" value="Urease_gamma"/>
    <property type="match status" value="1"/>
</dbReference>
<dbReference type="PIRSF" id="PIRSF001223">
    <property type="entry name" value="Urease_gamma"/>
    <property type="match status" value="1"/>
</dbReference>
<dbReference type="SUPFAM" id="SSF54111">
    <property type="entry name" value="Urease, gamma-subunit"/>
    <property type="match status" value="1"/>
</dbReference>
<accession>B1VHT0</accession>
<reference key="1">
    <citation type="journal article" date="2008" name="J. Biotechnol.">
        <title>The lifestyle of Corynebacterium urealyticum derived from its complete genome sequence established by pyrosequencing.</title>
        <authorList>
            <person name="Tauch A."/>
            <person name="Trost E."/>
            <person name="Tilker A."/>
            <person name="Ludewig U."/>
            <person name="Schneiker S."/>
            <person name="Goesmann A."/>
            <person name="Arnold W."/>
            <person name="Bekel T."/>
            <person name="Brinkrolf K."/>
            <person name="Brune I."/>
            <person name="Goetker S."/>
            <person name="Kalinowski J."/>
            <person name="Kamp P.-B."/>
            <person name="Lobo F.P."/>
            <person name="Viehoever P."/>
            <person name="Weisshaar B."/>
            <person name="Soriano F."/>
            <person name="Droege M."/>
            <person name="Puehler A."/>
        </authorList>
    </citation>
    <scope>NUCLEOTIDE SEQUENCE [LARGE SCALE GENOMIC DNA]</scope>
    <source>
        <strain>ATCC 43042 / DSM 7109</strain>
    </source>
</reference>
<keyword id="KW-0963">Cytoplasm</keyword>
<keyword id="KW-0378">Hydrolase</keyword>
<keyword id="KW-1185">Reference proteome</keyword>
<organism>
    <name type="scientific">Corynebacterium urealyticum (strain ATCC 43042 / DSM 7109)</name>
    <dbReference type="NCBI Taxonomy" id="504474"/>
    <lineage>
        <taxon>Bacteria</taxon>
        <taxon>Bacillati</taxon>
        <taxon>Actinomycetota</taxon>
        <taxon>Actinomycetes</taxon>
        <taxon>Mycobacteriales</taxon>
        <taxon>Corynebacteriaceae</taxon>
        <taxon>Corynebacterium</taxon>
    </lineage>
</organism>